<feature type="chain" id="PRO_0000228673" description="DNA polymerase delta subunit 4">
    <location>
        <begin position="1"/>
        <end position="107"/>
    </location>
</feature>
<feature type="region of interest" description="Disordered" evidence="3">
    <location>
        <begin position="1"/>
        <end position="35"/>
    </location>
</feature>
<feature type="short sequence motif" description="PCNA-interaction protein motif (PIP box)" evidence="1">
    <location>
        <begin position="1"/>
        <end position="16"/>
    </location>
</feature>
<feature type="compositionally biased region" description="Basic and acidic residues" evidence="3">
    <location>
        <begin position="15"/>
        <end position="28"/>
    </location>
</feature>
<dbReference type="EMBL" id="BC102212">
    <property type="protein sequence ID" value="AAI02213.1"/>
    <property type="molecule type" value="mRNA"/>
</dbReference>
<dbReference type="RefSeq" id="NP_001069949.1">
    <property type="nucleotide sequence ID" value="NM_001076481.2"/>
</dbReference>
<dbReference type="SMR" id="Q3T0X9"/>
<dbReference type="CORUM" id="Q3T0X9"/>
<dbReference type="FunCoup" id="Q3T0X9">
    <property type="interactions" value="255"/>
</dbReference>
<dbReference type="IntAct" id="Q3T0X9">
    <property type="interactions" value="1"/>
</dbReference>
<dbReference type="STRING" id="9913.ENSBTAP00000023866"/>
<dbReference type="PaxDb" id="9913-ENSBTAP00000023866"/>
<dbReference type="GeneID" id="617899"/>
<dbReference type="KEGG" id="bta:617899"/>
<dbReference type="CTD" id="57804"/>
<dbReference type="eggNOG" id="ENOG502SC9I">
    <property type="taxonomic scope" value="Eukaryota"/>
</dbReference>
<dbReference type="HOGENOM" id="CLU_132157_0_0_1"/>
<dbReference type="InParanoid" id="Q3T0X9"/>
<dbReference type="OrthoDB" id="337486at2759"/>
<dbReference type="TreeFam" id="TF103004"/>
<dbReference type="Proteomes" id="UP000009136">
    <property type="component" value="Unplaced"/>
</dbReference>
<dbReference type="GO" id="GO:0043625">
    <property type="term" value="C:delta DNA polymerase complex"/>
    <property type="evidence" value="ECO:0000314"/>
    <property type="project" value="UniProtKB"/>
</dbReference>
<dbReference type="GO" id="GO:0071897">
    <property type="term" value="P:DNA biosynthetic process"/>
    <property type="evidence" value="ECO:0000314"/>
    <property type="project" value="UniProtKB"/>
</dbReference>
<dbReference type="GO" id="GO:0000731">
    <property type="term" value="P:DNA synthesis involved in DNA repair"/>
    <property type="evidence" value="ECO:0000318"/>
    <property type="project" value="GO_Central"/>
</dbReference>
<dbReference type="GO" id="GO:0006261">
    <property type="term" value="P:DNA-templated DNA replication"/>
    <property type="evidence" value="ECO:0000318"/>
    <property type="project" value="GO_Central"/>
</dbReference>
<dbReference type="InterPro" id="IPR007218">
    <property type="entry name" value="DNA_pol_delta_4"/>
</dbReference>
<dbReference type="PANTHER" id="PTHR14303">
    <property type="entry name" value="DNA POLYMERASE DELTA SUBUNIT 4"/>
    <property type="match status" value="1"/>
</dbReference>
<dbReference type="PANTHER" id="PTHR14303:SF0">
    <property type="entry name" value="DNA POLYMERASE DELTA SUBUNIT 4"/>
    <property type="match status" value="1"/>
</dbReference>
<dbReference type="Pfam" id="PF04081">
    <property type="entry name" value="DNA_pol_delta_4"/>
    <property type="match status" value="1"/>
</dbReference>
<name>DPOD4_BOVIN</name>
<reference evidence="5" key="1">
    <citation type="submission" date="2005-08" db="EMBL/GenBank/DDBJ databases">
        <authorList>
            <consortium name="NIH - Mammalian Gene Collection (MGC) project"/>
        </authorList>
    </citation>
    <scope>NUCLEOTIDE SEQUENCE [LARGE SCALE MRNA]</scope>
    <source>
        <strain evidence="5">Crossbred X Angus</strain>
        <tissue evidence="5">Ileum</tissue>
    </source>
</reference>
<reference evidence="4" key="2">
    <citation type="journal article" date="2000" name="J. Biol. Chem.">
        <title>Identification of a fourth subunit of mammalian DNA polymerase delta.</title>
        <authorList>
            <person name="Liu L."/>
            <person name="Mo J.-Y."/>
            <person name="Rodriguez-Belmonte E.M."/>
            <person name="Lee M.Y.W.T."/>
        </authorList>
    </citation>
    <scope>PROTEIN SEQUENCE OF 51-66</scope>
    <scope>IDENTIFICATION IN POL-DELTA COMPLEX</scope>
    <scope>MASS SPECTROMETRY</scope>
    <source>
        <tissue>Thymus</tissue>
    </source>
</reference>
<comment type="function">
    <text evidence="1">As a component of the tetrameric DNA polymerase delta 4 complex (Pol-delta4), plays a role in high fidelity genome replication and repair. Within this complex, increases the rate of DNA synthesis and decreases fidelity by regulating POLD1 polymerase and proofreading 3' to 5' exonuclease activity. Pol-delta4 participates in Okazaki fragment processing, through both the short flap pathway, as well as a nick translation system. Under conditions of DNA replication stress, required for the repair of broken replication forks through break-induced replication (BIR), a mechanism that may induce segmental genomic duplications of up to 200 kb. Involved in Pol-delta4 translesion synthesis (TLS) of templates carrying O6-methylguanine or abasic sites. Its degradation in response to DNA damage is required for the inhibition of fork progression and cell survival.</text>
</comment>
<comment type="subunit">
    <text evidence="1">Component of the tetrameric DNA polymerase delta complex (Pol-delta4), which consists of POLD1/p125, POLD2/p50, POLD3/p66/p68 and POLD4/p12, with POLD1 bearing DNA polymerase and 3' to 5' proofreading exonuclease activities. Within this complex, directly interacts with POLD1 and POLD2. Directly interacts with PCNA, as do POLD1 and POLD3; this interaction stimulates Pol-delta4 polymerase activity. As POLD1 and POLD2, directly interacts with WRNIP1; this interaction stimulates DNA polymerase delta-mediated DNA synthesis, independently of the presence of PCNA, possibly by increasing initiation frequency. Upon genotoxic stress induced by DNA damaging agents or by replication stress, POLD4 is proteolytically degraded and Pol-delta4 is converted into a trimeric form of the complex (Pol-delta3) that has an increased proofreading activity. The DNA polymerase delta complex interacts with POLDIP2; this interaction is probably mediated through direct binding to POLD2.</text>
</comment>
<comment type="subcellular location">
    <subcellularLocation>
        <location evidence="1">Nucleus</location>
    </subcellularLocation>
    <text evidence="1">Partially recruited to DNA damage sites within 2 hours following UV irradiation, before degradation.</text>
</comment>
<comment type="PTM">
    <text evidence="1">Ubiquitinated; undergoes 'Lys-48'-linked ubiquitination in response to UV irradiation, leading to proteasomal degradation. This modification is partly mediated by RNF8 and by the DCX(DTL) E3 ubiquitin ligase complex (also called CRL4(CDT2)). Efficient degradation requires the presence of PCNA and is required for the inhibition of fork progression after DNA damage.</text>
</comment>
<comment type="similarity">
    <text evidence="2">Belongs to the DNA polymerase delta subunit 4 family.</text>
</comment>
<sequence length="107" mass="12342">MGRKRLITDSYPVVKRREGSAGHSKGELAPDLGEEPLPLSVDEEELELLRQFDLAWQYGPCTGITRLQRWHRAEQMGLKPPPEVHQVLQSHPGDPRFQCSLWHFYPL</sequence>
<keyword id="KW-0903">Direct protein sequencing</keyword>
<keyword id="KW-0227">DNA damage</keyword>
<keyword id="KW-0228">DNA excision</keyword>
<keyword id="KW-0234">DNA repair</keyword>
<keyword id="KW-0235">DNA replication</keyword>
<keyword id="KW-0539">Nucleus</keyword>
<keyword id="KW-1185">Reference proteome</keyword>
<keyword id="KW-0832">Ubl conjugation</keyword>
<gene>
    <name type="primary">POLD4</name>
</gene>
<accession>Q3T0X9</accession>
<protein>
    <recommendedName>
        <fullName>DNA polymerase delta subunit 4</fullName>
    </recommendedName>
    <alternativeName>
        <fullName>DNA polymerase delta subunit p12</fullName>
    </alternativeName>
</protein>
<organism>
    <name type="scientific">Bos taurus</name>
    <name type="common">Bovine</name>
    <dbReference type="NCBI Taxonomy" id="9913"/>
    <lineage>
        <taxon>Eukaryota</taxon>
        <taxon>Metazoa</taxon>
        <taxon>Chordata</taxon>
        <taxon>Craniata</taxon>
        <taxon>Vertebrata</taxon>
        <taxon>Euteleostomi</taxon>
        <taxon>Mammalia</taxon>
        <taxon>Eutheria</taxon>
        <taxon>Laurasiatheria</taxon>
        <taxon>Artiodactyla</taxon>
        <taxon>Ruminantia</taxon>
        <taxon>Pecora</taxon>
        <taxon>Bovidae</taxon>
        <taxon>Bovinae</taxon>
        <taxon>Bos</taxon>
    </lineage>
</organism>
<proteinExistence type="evidence at protein level"/>
<evidence type="ECO:0000250" key="1">
    <source>
        <dbReference type="UniProtKB" id="Q9HCU8"/>
    </source>
</evidence>
<evidence type="ECO:0000255" key="2"/>
<evidence type="ECO:0000256" key="3">
    <source>
        <dbReference type="SAM" id="MobiDB-lite"/>
    </source>
</evidence>
<evidence type="ECO:0000305" key="4"/>
<evidence type="ECO:0000312" key="5">
    <source>
        <dbReference type="EMBL" id="AAI02213.1"/>
    </source>
</evidence>